<sequence length="502" mass="55902">MALWRSSDNLVYLPPTPVSKVLSTDDYVTRTNIYYYAGTSRLLTVGHPYFPIPKSSTNKADVPKVSAFQYRVFRVRLPDPNKFGLPDARIYNPDAERLVWACTGVEVGRGQPLGVGLSGHPLYNKLDDTENSNIAHGDIGQDSRDNISLDNKQTQLCIVGCTPPMGEHWGKGTPCRQNTQQGDCPPLELITAPIQDGDMVDTGFGAMDFAVLQANKSDVPLDICQSTCKYPDYLGMAAEPYGDSMFFYLRKEQLFARHFFNRAGVAGDTIPETLYIKGQGNGRDVIGSAVYSPTPSGSMISSEAQLFNKPYWLRRAQGHNNGICWANQLFVTVVDTTRSTNMTLCVSTDSSATYDASKFKEYLRHGEEYDLQFIFQLCKVTLTPDIMAYLHTMNNSLLEDWNFGLTLPPSTSLEDTYRFISSSAITCQKDASPTTKEDPYAKLNFWEVDLKDRFSLDLSQFPLGRKFLMQLGVGARSSVSVRKRPASTTRGSSAAKRKRAKK</sequence>
<organismHost>
    <name type="scientific">Homo sapiens</name>
    <name type="common">Human</name>
    <dbReference type="NCBI Taxonomy" id="9606"/>
</organismHost>
<gene>
    <name evidence="1" type="primary">L1</name>
</gene>
<reference key="1">
    <citation type="submission" date="1995-10" db="EMBL/GenBank/DDBJ databases">
        <authorList>
            <person name="Delius H."/>
        </authorList>
    </citation>
    <scope>NUCLEOTIDE SEQUENCE [GENOMIC DNA]</scope>
</reference>
<reference key="2">
    <citation type="journal article" date="1994" name="J. Infect. Dis.">
        <title>Identification and assessment of known and novel human papillomaviruses by polymerase chain reaction amplification, restriction fragment length polymorphisms, nucleotide sequence, and phylogenetic algorithms.</title>
        <authorList>
            <person name="Bernard H.U."/>
            <person name="Chan S.-Y."/>
            <person name="Manos M.M."/>
            <person name="Ong C.K."/>
            <person name="Villa L.L."/>
            <person name="Delius H."/>
            <person name="Peyton C.L."/>
            <person name="Bauer H.M."/>
            <person name="Wheeler C.M."/>
        </authorList>
    </citation>
    <scope>NUCLEOTIDE SEQUENCE [GENOMIC DNA] OF 316-464</scope>
</reference>
<protein>
    <recommendedName>
        <fullName evidence="1">Major capsid protein L1</fullName>
    </recommendedName>
</protein>
<name>VL1_HPV28</name>
<evidence type="ECO:0000255" key="1">
    <source>
        <dbReference type="HAMAP-Rule" id="MF_04002"/>
    </source>
</evidence>
<evidence type="ECO:0000256" key="2">
    <source>
        <dbReference type="SAM" id="MobiDB-lite"/>
    </source>
</evidence>
<dbReference type="EMBL" id="U31783">
    <property type="protein sequence ID" value="AAA79428.1"/>
    <property type="molecule type" value="Genomic_DNA"/>
</dbReference>
<dbReference type="EMBL" id="U12502">
    <property type="protein sequence ID" value="AAA67246.1"/>
    <property type="molecule type" value="Genomic_DNA"/>
</dbReference>
<dbReference type="SMR" id="P50791"/>
<dbReference type="Proteomes" id="UP000009158">
    <property type="component" value="Genome"/>
</dbReference>
<dbReference type="GO" id="GO:0042025">
    <property type="term" value="C:host cell nucleus"/>
    <property type="evidence" value="ECO:0007669"/>
    <property type="project" value="UniProtKB-SubCell"/>
</dbReference>
<dbReference type="GO" id="GO:0039620">
    <property type="term" value="C:T=7 icosahedral viral capsid"/>
    <property type="evidence" value="ECO:0007669"/>
    <property type="project" value="UniProtKB-UniRule"/>
</dbReference>
<dbReference type="GO" id="GO:0005198">
    <property type="term" value="F:structural molecule activity"/>
    <property type="evidence" value="ECO:0007669"/>
    <property type="project" value="UniProtKB-UniRule"/>
</dbReference>
<dbReference type="GO" id="GO:0075509">
    <property type="term" value="P:endocytosis involved in viral entry into host cell"/>
    <property type="evidence" value="ECO:0007669"/>
    <property type="project" value="UniProtKB-KW"/>
</dbReference>
<dbReference type="GO" id="GO:0019062">
    <property type="term" value="P:virion attachment to host cell"/>
    <property type="evidence" value="ECO:0007669"/>
    <property type="project" value="UniProtKB-UniRule"/>
</dbReference>
<dbReference type="Gene3D" id="2.60.175.20">
    <property type="entry name" value="Major capsid L1 (late) superfamily, Papillomavirus"/>
    <property type="match status" value="2"/>
</dbReference>
<dbReference type="HAMAP" id="MF_04002">
    <property type="entry name" value="PPV_L1"/>
    <property type="match status" value="1"/>
</dbReference>
<dbReference type="InterPro" id="IPR002210">
    <property type="entry name" value="Capsid_L1_Papillomavir"/>
</dbReference>
<dbReference type="InterPro" id="IPR036973">
    <property type="entry name" value="Capsid_L1_sf_Papillomavir"/>
</dbReference>
<dbReference type="InterPro" id="IPR011222">
    <property type="entry name" value="dsDNA_vir_gr_I_capsid"/>
</dbReference>
<dbReference type="Pfam" id="PF00500">
    <property type="entry name" value="Late_protein_L1"/>
    <property type="match status" value="1"/>
</dbReference>
<dbReference type="PRINTS" id="PR00865">
    <property type="entry name" value="HPVCAPSIDL1"/>
</dbReference>
<dbReference type="SUPFAM" id="SSF88648">
    <property type="entry name" value="Group I dsDNA viruses"/>
    <property type="match status" value="1"/>
</dbReference>
<feature type="chain" id="PRO_0000133512" description="Major capsid protein L1">
    <location>
        <begin position="1"/>
        <end position="502"/>
    </location>
</feature>
<feature type="region of interest" description="Disordered" evidence="2">
    <location>
        <begin position="480"/>
        <end position="502"/>
    </location>
</feature>
<feature type="disulfide bond" description="Interchain (with C-427)" evidence="1">
    <location>
        <position position="175"/>
    </location>
</feature>
<feature type="disulfide bond" description="Interchain (with C-175)" evidence="1">
    <location>
        <position position="427"/>
    </location>
</feature>
<accession>P50791</accession>
<proteinExistence type="inferred from homology"/>
<organism>
    <name type="scientific">Human papillomavirus 28</name>
    <dbReference type="NCBI Taxonomy" id="37111"/>
    <lineage>
        <taxon>Viruses</taxon>
        <taxon>Monodnaviria</taxon>
        <taxon>Shotokuvirae</taxon>
        <taxon>Cossaviricota</taxon>
        <taxon>Papovaviricetes</taxon>
        <taxon>Zurhausenvirales</taxon>
        <taxon>Papillomaviridae</taxon>
        <taxon>Firstpapillomavirinae</taxon>
        <taxon>Alphapapillomavirus</taxon>
        <taxon>Alphapapillomavirus 2</taxon>
    </lineage>
</organism>
<keyword id="KW-0167">Capsid protein</keyword>
<keyword id="KW-1015">Disulfide bond</keyword>
<keyword id="KW-1048">Host nucleus</keyword>
<keyword id="KW-0945">Host-virus interaction</keyword>
<keyword id="KW-0426">Late protein</keyword>
<keyword id="KW-1145">T=7 icosahedral capsid protein</keyword>
<keyword id="KW-1161">Viral attachment to host cell</keyword>
<keyword id="KW-1162">Viral penetration into host cytoplasm</keyword>
<keyword id="KW-0946">Virion</keyword>
<keyword id="KW-1164">Virus endocytosis by host</keyword>
<keyword id="KW-1160">Virus entry into host cell</keyword>
<comment type="function">
    <text evidence="1">Forms an icosahedral capsid with a T=7 symmetry and a 50 nm diameter. The capsid is composed of 72 pentamers linked to each other by disulfide bonds and associated with L2 proteins. Binds to heparan sulfate proteoglycans on cell surface of basal layer keratinocytes to provide initial virion attachment. This binding mediates a conformational change in the virus capsid that facilitates efficient infection. The virion enters the host cell via endocytosis. During virus trafficking, L1 protein dissociates from the viral DNA and the genomic DNA is released to the host nucleus. The virion assembly takes place within the cell nucleus. Encapsulates the genomic DNA together with protein L2.</text>
</comment>
<comment type="subunit">
    <text evidence="1">Self-assembles into homopentamers. The capsid has an icosahedral symmetry and consists of 72 capsomers, with each capsomer being a pentamer of L1. Interacts with the minor capsid protein L2; this interaction is necessary for viral genome encapsidation. Interacts with protein E2; this interaction enhances E2-dependent replication and transcription activation.</text>
</comment>
<comment type="subcellular location">
    <subcellularLocation>
        <location evidence="1">Virion</location>
    </subcellularLocation>
    <subcellularLocation>
        <location evidence="1">Host nucleus</location>
    </subcellularLocation>
</comment>
<comment type="similarity">
    <text evidence="1">Belongs to the papillomaviridae L1 protein family.</text>
</comment>